<protein>
    <recommendedName>
        <fullName evidence="1">Nucleotide-binding protein PSPPH_4154</fullName>
    </recommendedName>
</protein>
<reference key="1">
    <citation type="journal article" date="2005" name="J. Bacteriol.">
        <title>Whole-genome sequence analysis of Pseudomonas syringae pv. phaseolicola 1448A reveals divergence among pathovars in genes involved in virulence and transposition.</title>
        <authorList>
            <person name="Joardar V."/>
            <person name="Lindeberg M."/>
            <person name="Jackson R.W."/>
            <person name="Selengut J."/>
            <person name="Dodson R."/>
            <person name="Brinkac L.M."/>
            <person name="Daugherty S.C."/>
            <person name="DeBoy R.T."/>
            <person name="Durkin A.S."/>
            <person name="Gwinn Giglio M."/>
            <person name="Madupu R."/>
            <person name="Nelson W.C."/>
            <person name="Rosovitz M.J."/>
            <person name="Sullivan S.A."/>
            <person name="Crabtree J."/>
            <person name="Creasy T."/>
            <person name="Davidsen T.M."/>
            <person name="Haft D.H."/>
            <person name="Zafar N."/>
            <person name="Zhou L."/>
            <person name="Halpin R."/>
            <person name="Holley T."/>
            <person name="Khouri H.M."/>
            <person name="Feldblyum T.V."/>
            <person name="White O."/>
            <person name="Fraser C.M."/>
            <person name="Chatterjee A.K."/>
            <person name="Cartinhour S."/>
            <person name="Schneider D."/>
            <person name="Mansfield J.W."/>
            <person name="Collmer A."/>
            <person name="Buell R."/>
        </authorList>
    </citation>
    <scope>NUCLEOTIDE SEQUENCE [LARGE SCALE GENOMIC DNA]</scope>
    <source>
        <strain>1448A / Race 6</strain>
    </source>
</reference>
<sequence>MRMIIVSGRSGSGKSTALDVLEDNGFYCVDNLPAGLLPELAERALINTELAEPLLAVSIDARNLPSHLTRFPQMLDEVRSRNIQCDVLYLDADEATLLKRFSETRRRHPLSTADRSLAEAIRDETTLLGPIIDLADLKINTTHLNLYQLRDALKLRLLNKPEPGTAFLIESFGFKRGMPVDADLVFDVRCLPNPYWKPELRDHSGLEQPVIDYLSVQPDVEEMFQDIFAYLNKWLPRFAASNRSYVTIAIGCTGGHHRSVYLTERLGQVLQQSLKNVQVRHRDLS</sequence>
<comment type="function">
    <text evidence="1">Displays ATPase and GTPase activities.</text>
</comment>
<comment type="similarity">
    <text evidence="1">Belongs to the RapZ-like family.</text>
</comment>
<name>Y4154_PSE14</name>
<proteinExistence type="inferred from homology"/>
<keyword id="KW-0067">ATP-binding</keyword>
<keyword id="KW-0342">GTP-binding</keyword>
<keyword id="KW-0547">Nucleotide-binding</keyword>
<evidence type="ECO:0000255" key="1">
    <source>
        <dbReference type="HAMAP-Rule" id="MF_00636"/>
    </source>
</evidence>
<accession>Q48EB2</accession>
<gene>
    <name type="ordered locus">PSPPH_4154</name>
</gene>
<organism>
    <name type="scientific">Pseudomonas savastanoi pv. phaseolicola (strain 1448A / Race 6)</name>
    <name type="common">Pseudomonas syringae pv. phaseolicola (strain 1448A / Race 6)</name>
    <dbReference type="NCBI Taxonomy" id="264730"/>
    <lineage>
        <taxon>Bacteria</taxon>
        <taxon>Pseudomonadati</taxon>
        <taxon>Pseudomonadota</taxon>
        <taxon>Gammaproteobacteria</taxon>
        <taxon>Pseudomonadales</taxon>
        <taxon>Pseudomonadaceae</taxon>
        <taxon>Pseudomonas</taxon>
    </lineage>
</organism>
<dbReference type="EMBL" id="CP000058">
    <property type="protein sequence ID" value="AAZ37148.1"/>
    <property type="molecule type" value="Genomic_DNA"/>
</dbReference>
<dbReference type="SMR" id="Q48EB2"/>
<dbReference type="KEGG" id="psp:PSPPH_4154"/>
<dbReference type="eggNOG" id="COG1660">
    <property type="taxonomic scope" value="Bacteria"/>
</dbReference>
<dbReference type="HOGENOM" id="CLU_059558_1_1_6"/>
<dbReference type="Proteomes" id="UP000000551">
    <property type="component" value="Chromosome"/>
</dbReference>
<dbReference type="GO" id="GO:0005524">
    <property type="term" value="F:ATP binding"/>
    <property type="evidence" value="ECO:0007669"/>
    <property type="project" value="UniProtKB-UniRule"/>
</dbReference>
<dbReference type="GO" id="GO:0005525">
    <property type="term" value="F:GTP binding"/>
    <property type="evidence" value="ECO:0007669"/>
    <property type="project" value="UniProtKB-UniRule"/>
</dbReference>
<dbReference type="HAMAP" id="MF_00636">
    <property type="entry name" value="RapZ_like"/>
    <property type="match status" value="1"/>
</dbReference>
<dbReference type="InterPro" id="IPR027417">
    <property type="entry name" value="P-loop_NTPase"/>
</dbReference>
<dbReference type="InterPro" id="IPR005337">
    <property type="entry name" value="RapZ-like"/>
</dbReference>
<dbReference type="InterPro" id="IPR053930">
    <property type="entry name" value="RapZ-like_N"/>
</dbReference>
<dbReference type="InterPro" id="IPR053931">
    <property type="entry name" value="RapZ_C"/>
</dbReference>
<dbReference type="NCBIfam" id="NF003828">
    <property type="entry name" value="PRK05416.1"/>
    <property type="match status" value="1"/>
</dbReference>
<dbReference type="PANTHER" id="PTHR30448">
    <property type="entry name" value="RNASE ADAPTER PROTEIN RAPZ"/>
    <property type="match status" value="1"/>
</dbReference>
<dbReference type="PANTHER" id="PTHR30448:SF0">
    <property type="entry name" value="RNASE ADAPTER PROTEIN RAPZ"/>
    <property type="match status" value="1"/>
</dbReference>
<dbReference type="Pfam" id="PF22740">
    <property type="entry name" value="PapZ_C"/>
    <property type="match status" value="1"/>
</dbReference>
<dbReference type="Pfam" id="PF03668">
    <property type="entry name" value="RapZ-like_N"/>
    <property type="match status" value="1"/>
</dbReference>
<dbReference type="PIRSF" id="PIRSF005052">
    <property type="entry name" value="P-loopkin"/>
    <property type="match status" value="1"/>
</dbReference>
<dbReference type="SUPFAM" id="SSF52540">
    <property type="entry name" value="P-loop containing nucleoside triphosphate hydrolases"/>
    <property type="match status" value="1"/>
</dbReference>
<feature type="chain" id="PRO_0000258983" description="Nucleotide-binding protein PSPPH_4154">
    <location>
        <begin position="1"/>
        <end position="285"/>
    </location>
</feature>
<feature type="binding site" evidence="1">
    <location>
        <begin position="8"/>
        <end position="15"/>
    </location>
    <ligand>
        <name>ATP</name>
        <dbReference type="ChEBI" id="CHEBI:30616"/>
    </ligand>
</feature>
<feature type="binding site" evidence="1">
    <location>
        <begin position="60"/>
        <end position="63"/>
    </location>
    <ligand>
        <name>GTP</name>
        <dbReference type="ChEBI" id="CHEBI:37565"/>
    </ligand>
</feature>